<sequence>MNRNDVTEKIITVKVSKGIQWADVAKKVGLSKEWTTAACLGQMTLDDKQAKVIGKIFGLTAEEQKWLQVVPYKGSLPTPVPTDPLIYRWYEVVSVYGTTIKELIHEEFGDGIMSAIDFSMDIQRQADPKGDRVNVVLSGKFLPYKTY</sequence>
<keyword id="KW-0456">Lyase</keyword>
<gene>
    <name evidence="1" type="primary">cynS</name>
    <name type="ordered locus">Vapar_1335</name>
</gene>
<name>CYNS_VARPS</name>
<proteinExistence type="inferred from homology"/>
<protein>
    <recommendedName>
        <fullName evidence="1">Cyanate hydratase</fullName>
        <shortName evidence="1">Cyanase</shortName>
        <ecNumber evidence="1">4.2.1.104</ecNumber>
    </recommendedName>
    <alternativeName>
        <fullName evidence="1">Cyanate hydrolase</fullName>
    </alternativeName>
    <alternativeName>
        <fullName evidence="1">Cyanate lyase</fullName>
    </alternativeName>
</protein>
<accession>C5CRQ4</accession>
<feature type="chain" id="PRO_1000211909" description="Cyanate hydratase">
    <location>
        <begin position="1"/>
        <end position="147"/>
    </location>
</feature>
<feature type="active site" evidence="1">
    <location>
        <position position="88"/>
    </location>
</feature>
<feature type="active site" evidence="1">
    <location>
        <position position="91"/>
    </location>
</feature>
<feature type="active site" evidence="1">
    <location>
        <position position="114"/>
    </location>
</feature>
<reference key="1">
    <citation type="journal article" date="2011" name="J. Bacteriol.">
        <title>Complete genome sequence of the metabolically versatile plant growth-promoting endophyte, Variovorax paradoxus S110.</title>
        <authorList>
            <person name="Han J.I."/>
            <person name="Choi H.K."/>
            <person name="Lee S.W."/>
            <person name="Orwin P.M."/>
            <person name="Kim J."/>
            <person name="Laroe S.L."/>
            <person name="Kim T.G."/>
            <person name="O'Neil J."/>
            <person name="Leadbetter J.R."/>
            <person name="Lee S.Y."/>
            <person name="Hur C.G."/>
            <person name="Spain J.C."/>
            <person name="Ovchinnikova G."/>
            <person name="Goodwin L."/>
            <person name="Han C."/>
        </authorList>
    </citation>
    <scope>NUCLEOTIDE SEQUENCE [LARGE SCALE GENOMIC DNA]</scope>
    <source>
        <strain>S110</strain>
    </source>
</reference>
<evidence type="ECO:0000255" key="1">
    <source>
        <dbReference type="HAMAP-Rule" id="MF_00535"/>
    </source>
</evidence>
<comment type="function">
    <text evidence="1">Catalyzes the reaction of cyanate with bicarbonate to produce ammonia and carbon dioxide.</text>
</comment>
<comment type="catalytic activity">
    <reaction evidence="1">
        <text>cyanate + hydrogencarbonate + 3 H(+) = NH4(+) + 2 CO2</text>
        <dbReference type="Rhea" id="RHEA:11120"/>
        <dbReference type="ChEBI" id="CHEBI:15378"/>
        <dbReference type="ChEBI" id="CHEBI:16526"/>
        <dbReference type="ChEBI" id="CHEBI:17544"/>
        <dbReference type="ChEBI" id="CHEBI:28938"/>
        <dbReference type="ChEBI" id="CHEBI:29195"/>
        <dbReference type="EC" id="4.2.1.104"/>
    </reaction>
</comment>
<comment type="similarity">
    <text evidence="1">Belongs to the cyanase family.</text>
</comment>
<organism>
    <name type="scientific">Variovorax paradoxus (strain S110)</name>
    <dbReference type="NCBI Taxonomy" id="543728"/>
    <lineage>
        <taxon>Bacteria</taxon>
        <taxon>Pseudomonadati</taxon>
        <taxon>Pseudomonadota</taxon>
        <taxon>Betaproteobacteria</taxon>
        <taxon>Burkholderiales</taxon>
        <taxon>Comamonadaceae</taxon>
        <taxon>Variovorax</taxon>
    </lineage>
</organism>
<dbReference type="EC" id="4.2.1.104" evidence="1"/>
<dbReference type="EMBL" id="CP001635">
    <property type="protein sequence ID" value="ACS17986.1"/>
    <property type="molecule type" value="Genomic_DNA"/>
</dbReference>
<dbReference type="SMR" id="C5CRQ4"/>
<dbReference type="STRING" id="543728.Vapar_1335"/>
<dbReference type="KEGG" id="vap:Vapar_1335"/>
<dbReference type="eggNOG" id="COG1513">
    <property type="taxonomic scope" value="Bacteria"/>
</dbReference>
<dbReference type="HOGENOM" id="CLU_103452_1_0_4"/>
<dbReference type="OrthoDB" id="9785870at2"/>
<dbReference type="GO" id="GO:0008824">
    <property type="term" value="F:cyanate hydratase activity"/>
    <property type="evidence" value="ECO:0007669"/>
    <property type="project" value="UniProtKB-UniRule"/>
</dbReference>
<dbReference type="GO" id="GO:0003677">
    <property type="term" value="F:DNA binding"/>
    <property type="evidence" value="ECO:0007669"/>
    <property type="project" value="InterPro"/>
</dbReference>
<dbReference type="GO" id="GO:0009439">
    <property type="term" value="P:cyanate metabolic process"/>
    <property type="evidence" value="ECO:0007669"/>
    <property type="project" value="UniProtKB-UniRule"/>
</dbReference>
<dbReference type="CDD" id="cd00559">
    <property type="entry name" value="Cyanase_C"/>
    <property type="match status" value="1"/>
</dbReference>
<dbReference type="Gene3D" id="3.30.1160.10">
    <property type="entry name" value="Cyanate lyase, C-terminal domain"/>
    <property type="match status" value="1"/>
</dbReference>
<dbReference type="Gene3D" id="1.10.260.40">
    <property type="entry name" value="lambda repressor-like DNA-binding domains"/>
    <property type="match status" value="1"/>
</dbReference>
<dbReference type="HAMAP" id="MF_00535">
    <property type="entry name" value="Cyanate_hydrat"/>
    <property type="match status" value="1"/>
</dbReference>
<dbReference type="InterPro" id="IPR008076">
    <property type="entry name" value="Cyanase"/>
</dbReference>
<dbReference type="InterPro" id="IPR003712">
    <property type="entry name" value="Cyanate_lyase_C"/>
</dbReference>
<dbReference type="InterPro" id="IPR036581">
    <property type="entry name" value="Cyanate_lyase_C_sf"/>
</dbReference>
<dbReference type="InterPro" id="IPR048564">
    <property type="entry name" value="CYNS_N"/>
</dbReference>
<dbReference type="InterPro" id="IPR010982">
    <property type="entry name" value="Lambda_DNA-bd_dom_sf"/>
</dbReference>
<dbReference type="NCBIfam" id="TIGR00673">
    <property type="entry name" value="cynS"/>
    <property type="match status" value="1"/>
</dbReference>
<dbReference type="NCBIfam" id="NF002773">
    <property type="entry name" value="PRK02866.1"/>
    <property type="match status" value="1"/>
</dbReference>
<dbReference type="PANTHER" id="PTHR34186">
    <property type="entry name" value="CYANATE HYDRATASE"/>
    <property type="match status" value="1"/>
</dbReference>
<dbReference type="PANTHER" id="PTHR34186:SF2">
    <property type="entry name" value="CYANATE HYDRATASE"/>
    <property type="match status" value="1"/>
</dbReference>
<dbReference type="Pfam" id="PF02560">
    <property type="entry name" value="Cyanate_lyase"/>
    <property type="match status" value="1"/>
</dbReference>
<dbReference type="Pfam" id="PF21291">
    <property type="entry name" value="CYNS_N"/>
    <property type="match status" value="1"/>
</dbReference>
<dbReference type="PIRSF" id="PIRSF001263">
    <property type="entry name" value="Cyanate_hydratas"/>
    <property type="match status" value="1"/>
</dbReference>
<dbReference type="PRINTS" id="PR01693">
    <property type="entry name" value="CYANASE"/>
</dbReference>
<dbReference type="SMART" id="SM01116">
    <property type="entry name" value="Cyanate_lyase"/>
    <property type="match status" value="1"/>
</dbReference>
<dbReference type="SUPFAM" id="SSF55234">
    <property type="entry name" value="Cyanase C-terminal domain"/>
    <property type="match status" value="1"/>
</dbReference>
<dbReference type="SUPFAM" id="SSF47413">
    <property type="entry name" value="lambda repressor-like DNA-binding domains"/>
    <property type="match status" value="1"/>
</dbReference>